<keyword id="KW-0274">FAD</keyword>
<keyword id="KW-0285">Flavoprotein</keyword>
<keyword id="KW-0535">Nitrogen fixation</keyword>
<keyword id="KW-0677">Repeat</keyword>
<keyword id="KW-0804">Transcription</keyword>
<keyword id="KW-0805">Transcription regulation</keyword>
<keyword id="KW-0902">Two-component regulatory system</keyword>
<organism>
    <name type="scientific">Klebsiella pneumoniae</name>
    <dbReference type="NCBI Taxonomy" id="573"/>
    <lineage>
        <taxon>Bacteria</taxon>
        <taxon>Pseudomonadati</taxon>
        <taxon>Pseudomonadota</taxon>
        <taxon>Gammaproteobacteria</taxon>
        <taxon>Enterobacterales</taxon>
        <taxon>Enterobacteriaceae</taxon>
        <taxon>Klebsiella/Raoultella group</taxon>
        <taxon>Klebsiella</taxon>
        <taxon>Klebsiella pneumoniae complex</taxon>
    </lineage>
</organism>
<gene>
    <name type="primary">nifL</name>
</gene>
<name>NIFL_KLEPN</name>
<feature type="chain" id="PRO_0000074817" description="Nitrogen fixation regulatory protein">
    <location>
        <begin position="1"/>
        <end position="495"/>
    </location>
</feature>
<feature type="domain" description="PAS 1" evidence="1">
    <location>
        <begin position="23"/>
        <end position="93"/>
    </location>
</feature>
<feature type="domain" description="PAC" evidence="2">
    <location>
        <begin position="94"/>
        <end position="148"/>
    </location>
</feature>
<feature type="domain" description="PAS 2; truncated" evidence="1">
    <location>
        <begin position="151"/>
        <end position="174"/>
    </location>
</feature>
<proteinExistence type="evidence at protein level"/>
<evidence type="ECO:0000255" key="1">
    <source>
        <dbReference type="PROSITE-ProRule" id="PRU00140"/>
    </source>
</evidence>
<evidence type="ECO:0000255" key="2">
    <source>
        <dbReference type="PROSITE-ProRule" id="PRU00141"/>
    </source>
</evidence>
<evidence type="ECO:0000269" key="3">
    <source>
    </source>
</evidence>
<accession>P06772</accession>
<sequence>MTLNMMLDNAVPEAIAGALTQQHPGLFFTMVEQASVAISLTDARANITYANPAFCRQTGYSLAQLLNQNPRLLASSQTPREIYQEMWQTLLQRQPWRGQLINQARDGGLYLVDIDITPVLNPQGELEHYLAMQRDISVSYTLEQRLRNHMTLMEAVLNNIPAAVVVVDEQDRVVMDNLAYKTFCADCGGKELLVELQVSPRKMGPGAEQILPVVVRGAVRWLSVTCWALPGVSEEASRYFVDSAPARTLMVIADCTQQRQQQEQGRLDRLKQQMTAGKLLAAIRESLDAALIQLNCPINMLAAARRLNGEGSGNVALDAAWREGEEAMARLQRCRPSLELESNAVWPLQPFFDDLYALYRTRFDDRARLQVDMASPHLVGFGQRTQLLACLSLWLDRTLALAAELPSVPLEIELYAEEDEGWLSLYLNDNVPLLQVRYAHSPDALNSPGKGMELRLIQTLVAYHRGAIELASRPQGGTSLVLRFPLFNTLTGGEQ</sequence>
<dbReference type="EMBL" id="X13303">
    <property type="protein sequence ID" value="CAA31681.1"/>
    <property type="molecule type" value="Genomic_DNA"/>
</dbReference>
<dbReference type="PIR" id="A48370">
    <property type="entry name" value="A48370"/>
</dbReference>
<dbReference type="IntAct" id="P06772">
    <property type="interactions" value="1"/>
</dbReference>
<dbReference type="MINT" id="P06772"/>
<dbReference type="GO" id="GO:0009399">
    <property type="term" value="P:nitrogen fixation"/>
    <property type="evidence" value="ECO:0000314"/>
    <property type="project" value="CACAO"/>
</dbReference>
<dbReference type="GO" id="GO:0000160">
    <property type="term" value="P:phosphorelay signal transduction system"/>
    <property type="evidence" value="ECO:0007669"/>
    <property type="project" value="UniProtKB-KW"/>
</dbReference>
<dbReference type="GO" id="GO:0006355">
    <property type="term" value="P:regulation of DNA-templated transcription"/>
    <property type="evidence" value="ECO:0007669"/>
    <property type="project" value="InterPro"/>
</dbReference>
<dbReference type="CDD" id="cd00130">
    <property type="entry name" value="PAS"/>
    <property type="match status" value="1"/>
</dbReference>
<dbReference type="Gene3D" id="3.30.450.20">
    <property type="entry name" value="PAS domain"/>
    <property type="match status" value="1"/>
</dbReference>
<dbReference type="InterPro" id="IPR052163">
    <property type="entry name" value="DGC-Regulatory_Protein"/>
</dbReference>
<dbReference type="InterPro" id="IPR036890">
    <property type="entry name" value="HATPase_C_sf"/>
</dbReference>
<dbReference type="InterPro" id="IPR014285">
    <property type="entry name" value="N_fixation_neg-reg_NifL"/>
</dbReference>
<dbReference type="InterPro" id="IPR001610">
    <property type="entry name" value="PAC"/>
</dbReference>
<dbReference type="InterPro" id="IPR000014">
    <property type="entry name" value="PAS"/>
</dbReference>
<dbReference type="InterPro" id="IPR000700">
    <property type="entry name" value="PAS-assoc_C"/>
</dbReference>
<dbReference type="InterPro" id="IPR035965">
    <property type="entry name" value="PAS-like_dom_sf"/>
</dbReference>
<dbReference type="InterPro" id="IPR013767">
    <property type="entry name" value="PAS_fold"/>
</dbReference>
<dbReference type="NCBIfam" id="TIGR02938">
    <property type="entry name" value="nifL_nitrog"/>
    <property type="match status" value="1"/>
</dbReference>
<dbReference type="NCBIfam" id="TIGR00229">
    <property type="entry name" value="sensory_box"/>
    <property type="match status" value="1"/>
</dbReference>
<dbReference type="PANTHER" id="PTHR46663">
    <property type="entry name" value="DIGUANYLATE CYCLASE DGCT-RELATED"/>
    <property type="match status" value="1"/>
</dbReference>
<dbReference type="PANTHER" id="PTHR46663:SF3">
    <property type="entry name" value="SLL0267 PROTEIN"/>
    <property type="match status" value="1"/>
</dbReference>
<dbReference type="Pfam" id="PF00989">
    <property type="entry name" value="PAS"/>
    <property type="match status" value="1"/>
</dbReference>
<dbReference type="SMART" id="SM00086">
    <property type="entry name" value="PAC"/>
    <property type="match status" value="1"/>
</dbReference>
<dbReference type="SMART" id="SM00091">
    <property type="entry name" value="PAS"/>
    <property type="match status" value="1"/>
</dbReference>
<dbReference type="SUPFAM" id="SSF55874">
    <property type="entry name" value="ATPase domain of HSP90 chaperone/DNA topoisomerase II/histidine kinase"/>
    <property type="match status" value="1"/>
</dbReference>
<dbReference type="SUPFAM" id="SSF55785">
    <property type="entry name" value="PYP-like sensor domain (PAS domain)"/>
    <property type="match status" value="1"/>
</dbReference>
<dbReference type="PROSITE" id="PS50113">
    <property type="entry name" value="PAC"/>
    <property type="match status" value="1"/>
</dbReference>
<dbReference type="PROSITE" id="PS50112">
    <property type="entry name" value="PAS"/>
    <property type="match status" value="1"/>
</dbReference>
<protein>
    <recommendedName>
        <fullName>Nitrogen fixation regulatory protein</fullName>
    </recommendedName>
</protein>
<comment type="function">
    <text>Required for the inhibition of NifA activity in response to oxygen and low level of fixed nitrogen.</text>
</comment>
<comment type="cofactor">
    <cofactor evidence="3">
        <name>FAD</name>
        <dbReference type="ChEBI" id="CHEBI:57692"/>
    </cofactor>
</comment>
<comment type="biophysicochemical properties">
    <redoxPotential>
        <text>E(0) is -277 mV.</text>
    </redoxPotential>
</comment>
<comment type="interaction">
    <interactant intactId="EBI-8500088">
        <id>P06772</id>
    </interactant>
    <interactant intactId="EBI-8499900">
        <id>Q9ZA65</id>
        <label>glnK</label>
    </interactant>
    <organismsDiffer>false</organismsDiffer>
    <experiments>4</experiments>
</comment>
<reference key="1">
    <citation type="journal article" date="1988" name="J. Mol. Biol.">
        <title>Nucleotide sequence of a 24,206-base-pair DNA fragment carrying the entire nitrogen fixation gene cluster of Klebsiella pneumoniae.</title>
        <authorList>
            <person name="Arnold W."/>
            <person name="Rump A."/>
            <person name="Klipp W."/>
            <person name="Priefer U.B."/>
            <person name="Puehler A."/>
        </authorList>
    </citation>
    <scope>NUCLEOTIDE SEQUENCE [GENOMIC DNA]</scope>
</reference>
<reference key="2">
    <citation type="journal article" date="1999" name="Biochim. Biophys. Acta">
        <title>NifL of Klebsiella pneumoniae: redox characterization in relation to the nitrogen source.</title>
        <authorList>
            <person name="Schmitz R.A."/>
        </authorList>
    </citation>
    <scope>CHARACTERIZATION</scope>
</reference>
<reference key="3">
    <citation type="journal article" date="1997" name="FEMS Microbiol. Lett.">
        <title>NifL of Klebsiella pneumoniae carries an N-terminally bound FAD cofactor, which is not directly required for the inhibitory function of NifL.</title>
        <authorList>
            <person name="Schmitz R.A."/>
        </authorList>
    </citation>
    <scope>FAD-BINDING</scope>
</reference>